<keyword id="KW-0067">ATP-binding</keyword>
<keyword id="KW-0547">Nucleotide-binding</keyword>
<keyword id="KW-0346">Stress response</keyword>
<reference key="1">
    <citation type="journal article" date="1993" name="Insect Mol. Biol.">
        <title>The Hsp70 heat-shock gene family of the mosquito Anopheles albimanus.</title>
        <authorList>
            <person name="Benedict M.Q."/>
            <person name="Cockburn A.F."/>
            <person name="Seawright J.A."/>
        </authorList>
    </citation>
    <scope>NUCLEOTIDE SEQUENCE [GENOMIC DNA]</scope>
</reference>
<protein>
    <recommendedName>
        <fullName>Heat shock protein 70 B2</fullName>
    </recommendedName>
</protein>
<comment type="similarity">
    <text evidence="2">Belongs to the heat shock protein 70 family.</text>
</comment>
<dbReference type="EMBL" id="M96661">
    <property type="protein sequence ID" value="AAC41543.1"/>
    <property type="molecule type" value="Genomic_DNA"/>
</dbReference>
<dbReference type="EMBL" id="M96661">
    <property type="protein sequence ID" value="AAC41542.1"/>
    <property type="molecule type" value="Genomic_DNA"/>
</dbReference>
<dbReference type="PIR" id="T43730">
    <property type="entry name" value="T43730"/>
</dbReference>
<dbReference type="SMR" id="P41827"/>
<dbReference type="STRING" id="7167.P41827"/>
<dbReference type="VEuPathDB" id="VectorBase:AALB009697"/>
<dbReference type="VEuPathDB" id="VectorBase:AALB20_033553"/>
<dbReference type="Proteomes" id="UP000069272">
    <property type="component" value="Unassembled WGS sequence"/>
</dbReference>
<dbReference type="GO" id="GO:0005524">
    <property type="term" value="F:ATP binding"/>
    <property type="evidence" value="ECO:0007669"/>
    <property type="project" value="UniProtKB-KW"/>
</dbReference>
<dbReference type="GO" id="GO:0140662">
    <property type="term" value="F:ATP-dependent protein folding chaperone"/>
    <property type="evidence" value="ECO:0007669"/>
    <property type="project" value="InterPro"/>
</dbReference>
<dbReference type="CDD" id="cd10233">
    <property type="entry name" value="ASKHA_NBD_HSP70_HSPA1"/>
    <property type="match status" value="1"/>
</dbReference>
<dbReference type="FunFam" id="2.60.34.10:FF:000002">
    <property type="entry name" value="Heat shock 70 kDa"/>
    <property type="match status" value="1"/>
</dbReference>
<dbReference type="FunFam" id="3.30.420.40:FF:000172">
    <property type="entry name" value="Heat shock 70 kDa protein"/>
    <property type="match status" value="1"/>
</dbReference>
<dbReference type="FunFam" id="3.90.640.10:FF:000058">
    <property type="entry name" value="Heat shock 70 kDa protein"/>
    <property type="match status" value="1"/>
</dbReference>
<dbReference type="FunFam" id="3.30.30.30:FF:000001">
    <property type="entry name" value="heat shock 70 kDa protein-like"/>
    <property type="match status" value="1"/>
</dbReference>
<dbReference type="FunFam" id="1.20.1270.10:FF:000024">
    <property type="entry name" value="Heat shock protein 70"/>
    <property type="match status" value="1"/>
</dbReference>
<dbReference type="FunFam" id="3.30.420.40:FF:000026">
    <property type="entry name" value="Heat shock protein 70"/>
    <property type="match status" value="1"/>
</dbReference>
<dbReference type="Gene3D" id="1.20.1270.10">
    <property type="match status" value="1"/>
</dbReference>
<dbReference type="Gene3D" id="3.30.30.30">
    <property type="match status" value="1"/>
</dbReference>
<dbReference type="Gene3D" id="3.30.420.40">
    <property type="match status" value="2"/>
</dbReference>
<dbReference type="Gene3D" id="3.90.640.10">
    <property type="entry name" value="Actin, Chain A, domain 4"/>
    <property type="match status" value="1"/>
</dbReference>
<dbReference type="Gene3D" id="2.60.34.10">
    <property type="entry name" value="Substrate Binding Domain Of DNAk, Chain A, domain 1"/>
    <property type="match status" value="1"/>
</dbReference>
<dbReference type="InterPro" id="IPR043129">
    <property type="entry name" value="ATPase_NBD"/>
</dbReference>
<dbReference type="InterPro" id="IPR018181">
    <property type="entry name" value="Heat_shock_70_CS"/>
</dbReference>
<dbReference type="InterPro" id="IPR029048">
    <property type="entry name" value="HSP70_C_sf"/>
</dbReference>
<dbReference type="InterPro" id="IPR029047">
    <property type="entry name" value="HSP70_peptide-bd_sf"/>
</dbReference>
<dbReference type="InterPro" id="IPR013126">
    <property type="entry name" value="Hsp_70_fam"/>
</dbReference>
<dbReference type="NCBIfam" id="NF001413">
    <property type="entry name" value="PRK00290.1"/>
    <property type="match status" value="1"/>
</dbReference>
<dbReference type="PANTHER" id="PTHR19375">
    <property type="entry name" value="HEAT SHOCK PROTEIN 70KDA"/>
    <property type="match status" value="1"/>
</dbReference>
<dbReference type="Pfam" id="PF00012">
    <property type="entry name" value="HSP70"/>
    <property type="match status" value="1"/>
</dbReference>
<dbReference type="PRINTS" id="PR00301">
    <property type="entry name" value="HEATSHOCK70"/>
</dbReference>
<dbReference type="SUPFAM" id="SSF53067">
    <property type="entry name" value="Actin-like ATPase domain"/>
    <property type="match status" value="2"/>
</dbReference>
<dbReference type="SUPFAM" id="SSF100934">
    <property type="entry name" value="Heat shock protein 70kD (HSP70), C-terminal subdomain"/>
    <property type="match status" value="1"/>
</dbReference>
<dbReference type="SUPFAM" id="SSF100920">
    <property type="entry name" value="Heat shock protein 70kD (HSP70), peptide-binding domain"/>
    <property type="match status" value="1"/>
</dbReference>
<dbReference type="PROSITE" id="PS00297">
    <property type="entry name" value="HSP70_1"/>
    <property type="match status" value="1"/>
</dbReference>
<dbReference type="PROSITE" id="PS00329">
    <property type="entry name" value="HSP70_2"/>
    <property type="match status" value="1"/>
</dbReference>
<dbReference type="PROSITE" id="PS01036">
    <property type="entry name" value="HSP70_3"/>
    <property type="match status" value="1"/>
</dbReference>
<sequence>MPSAIGIDLGTTYSCVGVFQHGKVEIIANDQGNRTTPSYVAFSDTERLIGDAAKNQVAMNPTNTVFDAKRLIGRKFDDPKIQADMKHWPFTVVNDGGKPKIRVEFKGERKTFAPEEISSMVLTKMKETAEAYLGQSVKNAVITVPAYFNDSQRQATKDAGAIAGLNVMRIINEPTAAALAYGLDKNLKGERNVLIFDLGGGTFDVSILTIDEGSLFEVRSTAGDTHLGGEDFDNRMVGHFVEEFKRKHKKDLSKNARALRRLRTACERAKRTLSSSTEATIEIDALMDGIDYYTKISRARFEELCSDLFRSTLQPVEKALSDAKMDKSSIHDIVLVGGSTRIPKVQSLLQNFFAGKSLNLSINPDEAVAYGAAVQAAILSGDKDDKIQDVLLVDVAPLSLGIETAGGVMTKLIERNSRIPCKQTQIFSTYADNQPGVSIQVFEGERAMTKDNNLLGQFDLSGIPPAPRGVPQIEVTFDLDANGILNVAAKEKSTGKEKNITIKNDKGRLSQADIDRMVSEAEKFREEDEKQRERISARNQLEAYCFNLKQSLDGEGASKLSDADRKTVQDRCEETLRWIDGNTMADKEEFEHKMQELTKACSPIMTKLHQQAAGGPSPSSCAQQAGGFGGRTGPTVEEVD</sequence>
<name>HSP74_ANOAL</name>
<organism>
    <name type="scientific">Anopheles albimanus</name>
    <name type="common">New world malaria mosquito</name>
    <dbReference type="NCBI Taxonomy" id="7167"/>
    <lineage>
        <taxon>Eukaryota</taxon>
        <taxon>Metazoa</taxon>
        <taxon>Ecdysozoa</taxon>
        <taxon>Arthropoda</taxon>
        <taxon>Hexapoda</taxon>
        <taxon>Insecta</taxon>
        <taxon>Pterygota</taxon>
        <taxon>Neoptera</taxon>
        <taxon>Endopterygota</taxon>
        <taxon>Diptera</taxon>
        <taxon>Nematocera</taxon>
        <taxon>Culicoidea</taxon>
        <taxon>Culicidae</taxon>
        <taxon>Anophelinae</taxon>
        <taxon>Anopheles</taxon>
    </lineage>
</organism>
<proteinExistence type="inferred from homology"/>
<accession>P41827</accession>
<gene>
    <name type="primary">HSP70B2</name>
    <name type="synonym">HSP11-C-L</name>
</gene>
<feature type="chain" id="PRO_0000078327" description="Heat shock protein 70 B2">
    <location>
        <begin position="1"/>
        <end position="640"/>
    </location>
</feature>
<feature type="region of interest" description="Disordered" evidence="1">
    <location>
        <begin position="608"/>
        <end position="640"/>
    </location>
</feature>
<evidence type="ECO:0000256" key="1">
    <source>
        <dbReference type="SAM" id="MobiDB-lite"/>
    </source>
</evidence>
<evidence type="ECO:0000305" key="2"/>